<organism>
    <name type="scientific">Homo sapiens</name>
    <name type="common">Human</name>
    <dbReference type="NCBI Taxonomy" id="9606"/>
    <lineage>
        <taxon>Eukaryota</taxon>
        <taxon>Metazoa</taxon>
        <taxon>Chordata</taxon>
        <taxon>Craniata</taxon>
        <taxon>Vertebrata</taxon>
        <taxon>Euteleostomi</taxon>
        <taxon>Mammalia</taxon>
        <taxon>Eutheria</taxon>
        <taxon>Euarchontoglires</taxon>
        <taxon>Primates</taxon>
        <taxon>Haplorrhini</taxon>
        <taxon>Catarrhini</taxon>
        <taxon>Hominidae</taxon>
        <taxon>Homo</taxon>
    </lineage>
</organism>
<reference key="1">
    <citation type="journal article" date="1997" name="Genomics">
        <title>Characterization of glypican-5 and chromosomal localization of human GPC5, a new member of the glypican gene family.</title>
        <authorList>
            <person name="Veugelers M."/>
            <person name="Vermeesch J."/>
            <person name="Reekmans G."/>
            <person name="Steinfeld R."/>
            <person name="Marynen P."/>
            <person name="David G."/>
        </authorList>
    </citation>
    <scope>NUCLEOTIDE SEQUENCE [MRNA]</scope>
    <scope>TISSUE SPECIFICITY</scope>
    <source>
        <tissue>Brain</tissue>
    </source>
</reference>
<reference key="2">
    <citation type="journal article" date="1997" name="Dev. Biol.">
        <title>Expression of the cell surface proteoglycan glypican-5 is developmentally regulated in kidney, limb, and brain.</title>
        <authorList>
            <person name="Saunders S."/>
            <person name="Paine-Saunders S."/>
            <person name="Lander A.D."/>
        </authorList>
    </citation>
    <scope>NUCLEOTIDE SEQUENCE [MRNA]</scope>
    <scope>TISSUE SPECIFICITY</scope>
    <source>
        <tissue>Brain</tissue>
    </source>
</reference>
<reference key="3">
    <citation type="journal article" date="2004" name="Nat. Genet.">
        <title>Complete sequencing and characterization of 21,243 full-length human cDNAs.</title>
        <authorList>
            <person name="Ota T."/>
            <person name="Suzuki Y."/>
            <person name="Nishikawa T."/>
            <person name="Otsuki T."/>
            <person name="Sugiyama T."/>
            <person name="Irie R."/>
            <person name="Wakamatsu A."/>
            <person name="Hayashi K."/>
            <person name="Sato H."/>
            <person name="Nagai K."/>
            <person name="Kimura K."/>
            <person name="Makita H."/>
            <person name="Sekine M."/>
            <person name="Obayashi M."/>
            <person name="Nishi T."/>
            <person name="Shibahara T."/>
            <person name="Tanaka T."/>
            <person name="Ishii S."/>
            <person name="Yamamoto J."/>
            <person name="Saito K."/>
            <person name="Kawai Y."/>
            <person name="Isono Y."/>
            <person name="Nakamura Y."/>
            <person name="Nagahari K."/>
            <person name="Murakami K."/>
            <person name="Yasuda T."/>
            <person name="Iwayanagi T."/>
            <person name="Wagatsuma M."/>
            <person name="Shiratori A."/>
            <person name="Sudo H."/>
            <person name="Hosoiri T."/>
            <person name="Kaku Y."/>
            <person name="Kodaira H."/>
            <person name="Kondo H."/>
            <person name="Sugawara M."/>
            <person name="Takahashi M."/>
            <person name="Kanda K."/>
            <person name="Yokoi T."/>
            <person name="Furuya T."/>
            <person name="Kikkawa E."/>
            <person name="Omura Y."/>
            <person name="Abe K."/>
            <person name="Kamihara K."/>
            <person name="Katsuta N."/>
            <person name="Sato K."/>
            <person name="Tanikawa M."/>
            <person name="Yamazaki M."/>
            <person name="Ninomiya K."/>
            <person name="Ishibashi T."/>
            <person name="Yamashita H."/>
            <person name="Murakawa K."/>
            <person name="Fujimori K."/>
            <person name="Tanai H."/>
            <person name="Kimata M."/>
            <person name="Watanabe M."/>
            <person name="Hiraoka S."/>
            <person name="Chiba Y."/>
            <person name="Ishida S."/>
            <person name="Ono Y."/>
            <person name="Takiguchi S."/>
            <person name="Watanabe S."/>
            <person name="Yosida M."/>
            <person name="Hotuta T."/>
            <person name="Kusano J."/>
            <person name="Kanehori K."/>
            <person name="Takahashi-Fujii A."/>
            <person name="Hara H."/>
            <person name="Tanase T.-O."/>
            <person name="Nomura Y."/>
            <person name="Togiya S."/>
            <person name="Komai F."/>
            <person name="Hara R."/>
            <person name="Takeuchi K."/>
            <person name="Arita M."/>
            <person name="Imose N."/>
            <person name="Musashino K."/>
            <person name="Yuuki H."/>
            <person name="Oshima A."/>
            <person name="Sasaki N."/>
            <person name="Aotsuka S."/>
            <person name="Yoshikawa Y."/>
            <person name="Matsunawa H."/>
            <person name="Ichihara T."/>
            <person name="Shiohata N."/>
            <person name="Sano S."/>
            <person name="Moriya S."/>
            <person name="Momiyama H."/>
            <person name="Satoh N."/>
            <person name="Takami S."/>
            <person name="Terashima Y."/>
            <person name="Suzuki O."/>
            <person name="Nakagawa S."/>
            <person name="Senoh A."/>
            <person name="Mizoguchi H."/>
            <person name="Goto Y."/>
            <person name="Shimizu F."/>
            <person name="Wakebe H."/>
            <person name="Hishigaki H."/>
            <person name="Watanabe T."/>
            <person name="Sugiyama A."/>
            <person name="Takemoto M."/>
            <person name="Kawakami B."/>
            <person name="Yamazaki M."/>
            <person name="Watanabe K."/>
            <person name="Kumagai A."/>
            <person name="Itakura S."/>
            <person name="Fukuzumi Y."/>
            <person name="Fujimori Y."/>
            <person name="Komiyama M."/>
            <person name="Tashiro H."/>
            <person name="Tanigami A."/>
            <person name="Fujiwara T."/>
            <person name="Ono T."/>
            <person name="Yamada K."/>
            <person name="Fujii Y."/>
            <person name="Ozaki K."/>
            <person name="Hirao M."/>
            <person name="Ohmori Y."/>
            <person name="Kawabata A."/>
            <person name="Hikiji T."/>
            <person name="Kobatake N."/>
            <person name="Inagaki H."/>
            <person name="Ikema Y."/>
            <person name="Okamoto S."/>
            <person name="Okitani R."/>
            <person name="Kawakami T."/>
            <person name="Noguchi S."/>
            <person name="Itoh T."/>
            <person name="Shigeta K."/>
            <person name="Senba T."/>
            <person name="Matsumura K."/>
            <person name="Nakajima Y."/>
            <person name="Mizuno T."/>
            <person name="Morinaga M."/>
            <person name="Sasaki M."/>
            <person name="Togashi T."/>
            <person name="Oyama M."/>
            <person name="Hata H."/>
            <person name="Watanabe M."/>
            <person name="Komatsu T."/>
            <person name="Mizushima-Sugano J."/>
            <person name="Satoh T."/>
            <person name="Shirai Y."/>
            <person name="Takahashi Y."/>
            <person name="Nakagawa K."/>
            <person name="Okumura K."/>
            <person name="Nagase T."/>
            <person name="Nomura N."/>
            <person name="Kikuchi H."/>
            <person name="Masuho Y."/>
            <person name="Yamashita R."/>
            <person name="Nakai K."/>
            <person name="Yada T."/>
            <person name="Nakamura Y."/>
            <person name="Ohara O."/>
            <person name="Isogai T."/>
            <person name="Sugano S."/>
        </authorList>
    </citation>
    <scope>NUCLEOTIDE SEQUENCE [LARGE SCALE MRNA]</scope>
    <source>
        <tissue>Testis</tissue>
    </source>
</reference>
<reference key="4">
    <citation type="journal article" date="2004" name="Nature">
        <title>The DNA sequence and analysis of human chromosome 13.</title>
        <authorList>
            <person name="Dunham A."/>
            <person name="Matthews L.H."/>
            <person name="Burton J."/>
            <person name="Ashurst J.L."/>
            <person name="Howe K.L."/>
            <person name="Ashcroft K.J."/>
            <person name="Beare D.M."/>
            <person name="Burford D.C."/>
            <person name="Hunt S.E."/>
            <person name="Griffiths-Jones S."/>
            <person name="Jones M.C."/>
            <person name="Keenan S.J."/>
            <person name="Oliver K."/>
            <person name="Scott C.E."/>
            <person name="Ainscough R."/>
            <person name="Almeida J.P."/>
            <person name="Ambrose K.D."/>
            <person name="Andrews D.T."/>
            <person name="Ashwell R.I.S."/>
            <person name="Babbage A.K."/>
            <person name="Bagguley C.L."/>
            <person name="Bailey J."/>
            <person name="Bannerjee R."/>
            <person name="Barlow K.F."/>
            <person name="Bates K."/>
            <person name="Beasley H."/>
            <person name="Bird C.P."/>
            <person name="Bray-Allen S."/>
            <person name="Brown A.J."/>
            <person name="Brown J.Y."/>
            <person name="Burrill W."/>
            <person name="Carder C."/>
            <person name="Carter N.P."/>
            <person name="Chapman J.C."/>
            <person name="Clamp M.E."/>
            <person name="Clark S.Y."/>
            <person name="Clarke G."/>
            <person name="Clee C.M."/>
            <person name="Clegg S.C."/>
            <person name="Cobley V."/>
            <person name="Collins J.E."/>
            <person name="Corby N."/>
            <person name="Coville G.J."/>
            <person name="Deloukas P."/>
            <person name="Dhami P."/>
            <person name="Dunham I."/>
            <person name="Dunn M."/>
            <person name="Earthrowl M.E."/>
            <person name="Ellington A.G."/>
            <person name="Faulkner L."/>
            <person name="Frankish A.G."/>
            <person name="Frankland J."/>
            <person name="French L."/>
            <person name="Garner P."/>
            <person name="Garnett J."/>
            <person name="Gilbert J.G.R."/>
            <person name="Gilson C.J."/>
            <person name="Ghori J."/>
            <person name="Grafham D.V."/>
            <person name="Gribble S.M."/>
            <person name="Griffiths C."/>
            <person name="Hall R.E."/>
            <person name="Hammond S."/>
            <person name="Harley J.L."/>
            <person name="Hart E.A."/>
            <person name="Heath P.D."/>
            <person name="Howden P.J."/>
            <person name="Huckle E.J."/>
            <person name="Hunt P.J."/>
            <person name="Hunt A.R."/>
            <person name="Johnson C."/>
            <person name="Johnson D."/>
            <person name="Kay M."/>
            <person name="Kimberley A.M."/>
            <person name="King A."/>
            <person name="Laird G.K."/>
            <person name="Langford C.J."/>
            <person name="Lawlor S."/>
            <person name="Leongamornlert D.A."/>
            <person name="Lloyd D.M."/>
            <person name="Lloyd C."/>
            <person name="Loveland J.E."/>
            <person name="Lovell J."/>
            <person name="Martin S."/>
            <person name="Mashreghi-Mohammadi M."/>
            <person name="McLaren S.J."/>
            <person name="McMurray A."/>
            <person name="Milne S."/>
            <person name="Moore M.J.F."/>
            <person name="Nickerson T."/>
            <person name="Palmer S.A."/>
            <person name="Pearce A.V."/>
            <person name="Peck A.I."/>
            <person name="Pelan S."/>
            <person name="Phillimore B."/>
            <person name="Porter K.M."/>
            <person name="Rice C.M."/>
            <person name="Searle S."/>
            <person name="Sehra H.K."/>
            <person name="Shownkeen R."/>
            <person name="Skuce C.D."/>
            <person name="Smith M."/>
            <person name="Steward C.A."/>
            <person name="Sycamore N."/>
            <person name="Tester J."/>
            <person name="Thomas D.W."/>
            <person name="Tracey A."/>
            <person name="Tromans A."/>
            <person name="Tubby B."/>
            <person name="Wall M."/>
            <person name="Wallis J.M."/>
            <person name="West A.P."/>
            <person name="Whitehead S.L."/>
            <person name="Willey D.L."/>
            <person name="Wilming L."/>
            <person name="Wray P.W."/>
            <person name="Wright M.W."/>
            <person name="Young L."/>
            <person name="Coulson A."/>
            <person name="Durbin R.M."/>
            <person name="Hubbard T."/>
            <person name="Sulston J.E."/>
            <person name="Beck S."/>
            <person name="Bentley D.R."/>
            <person name="Rogers J."/>
            <person name="Ross M.T."/>
        </authorList>
    </citation>
    <scope>NUCLEOTIDE SEQUENCE [LARGE SCALE GENOMIC DNA]</scope>
</reference>
<reference key="5">
    <citation type="journal article" date="2004" name="Genome Res.">
        <title>The status, quality, and expansion of the NIH full-length cDNA project: the Mammalian Gene Collection (MGC).</title>
        <authorList>
            <consortium name="The MGC Project Team"/>
        </authorList>
    </citation>
    <scope>NUCLEOTIDE SEQUENCE [LARGE SCALE MRNA]</scope>
    <source>
        <tissue>Brain</tissue>
    </source>
</reference>
<comment type="function">
    <text evidence="1">Cell surface proteoglycan that bears heparan sulfate.</text>
</comment>
<comment type="interaction">
    <interactant intactId="EBI-2558325">
        <id>P78333</id>
    </interactant>
    <interactant intactId="EBI-18924329">
        <id>Q96IK1-2</id>
        <label>BOD1</label>
    </interactant>
    <organismsDiffer>false</organismsDiffer>
    <experiments>3</experiments>
</comment>
<comment type="interaction">
    <interactant intactId="EBI-2558325">
        <id>P78333</id>
    </interactant>
    <interactant intactId="EBI-3893327">
        <id>Q6P1L5</id>
        <label>FAM117B</label>
    </interactant>
    <organismsDiffer>false</organismsDiffer>
    <experiments>3</experiments>
</comment>
<comment type="interaction">
    <interactant intactId="EBI-2558325">
        <id>P78333</id>
    </interactant>
    <interactant intactId="EBI-20895185">
        <id>Q6PRD1</id>
        <label>GPR179</label>
    </interactant>
    <organismsDiffer>false</organismsDiffer>
    <experiments>2</experiments>
</comment>
<comment type="interaction">
    <interactant intactId="EBI-2558325">
        <id>P78333</id>
    </interactant>
    <interactant intactId="EBI-10694180">
        <id>Q8TD91-2</id>
        <label>MAGEC3</label>
    </interactant>
    <organismsDiffer>false</organismsDiffer>
    <experiments>3</experiments>
</comment>
<comment type="interaction">
    <interactant intactId="EBI-2558325">
        <id>P78333</id>
    </interactant>
    <interactant intactId="EBI-752324">
        <id>Q8N488</id>
        <label>RYBP</label>
    </interactant>
    <organismsDiffer>false</organismsDiffer>
    <experiments>3</experiments>
</comment>
<comment type="interaction">
    <interactant intactId="EBI-2558325">
        <id>P78333</id>
    </interactant>
    <interactant intactId="EBI-776313">
        <id>Q8C419</id>
        <label>Gpr158</label>
    </interactant>
    <organismsDiffer>true</organismsDiffer>
    <experiments>2</experiments>
</comment>
<comment type="subcellular location">
    <subcellularLocation>
        <location evidence="1">Cell membrane</location>
        <topology evidence="1">Lipid-anchor</topology>
        <topology evidence="1">GPI-anchor</topology>
        <orientation evidence="1">Extracellular side</orientation>
    </subcellularLocation>
</comment>
<comment type="subcellular location">
    <molecule>Secreted glypican-5</molecule>
    <subcellularLocation>
        <location evidence="1">Secreted</location>
        <location evidence="1">Extracellular space</location>
    </subcellularLocation>
</comment>
<comment type="tissue specificity">
    <text evidence="4 5">In adult, primarily expressed in the brain. Also detected in fetal brain, lung and liver.</text>
</comment>
<comment type="similarity">
    <text evidence="6">Belongs to the glypican family.</text>
</comment>
<comment type="online information" name="Atlas of Genetics and Cytogenetics in Oncology and Haematology">
    <link uri="https://atlasgeneticsoncology.org/gene/45705/GPC5"/>
</comment>
<protein>
    <recommendedName>
        <fullName>Glypican-5</fullName>
    </recommendedName>
    <component>
        <recommendedName>
            <fullName>Secreted glypican-5</fullName>
        </recommendedName>
    </component>
</protein>
<keyword id="KW-1003">Cell membrane</keyword>
<keyword id="KW-0325">Glycoprotein</keyword>
<keyword id="KW-0336">GPI-anchor</keyword>
<keyword id="KW-0357">Heparan sulfate</keyword>
<keyword id="KW-0449">Lipoprotein</keyword>
<keyword id="KW-0472">Membrane</keyword>
<keyword id="KW-0654">Proteoglycan</keyword>
<keyword id="KW-1267">Proteomics identification</keyword>
<keyword id="KW-1185">Reference proteome</keyword>
<keyword id="KW-0964">Secreted</keyword>
<keyword id="KW-0732">Signal</keyword>
<sequence>MDAQTWPVGFRCLLLLALVGSARSEGVQTCEEVRKLFQWRLLGAVRGLPDSPRAGPDLQVCISKKPTCCTRKMEERYQIAARQDMQQFLQTSSSTLKFLISRNAAAFQETLETLIKQAENYTSILFCSTYRNMALEAAASVQEFFTDVGLYLFGADVNPEEFVNRFFDSLFPLVYNHLINPGVTDSSLEYSECIRMARRDVSPFGNIPQRVMGQMGRSLLPSRTFLQALNLGIEVINTTDYLHFSKECSRALLKMQYCPHCQGLALTKPCMGYCLNVMRGCLAHMAELNPHWHAYIRSLEELSDAMHGTYDIGHVLLNFHLLVNDAVLQAHLNGQKLLEQVNRICGRPVRTPTQSPRCSFDQSKEKHGMKTTTRNSEETLANRRKEFINSLRLYRSFYGGLADQLCANELAAADGLPCWNGEDIVKSYTQRVVGNGIKAQSGNPEVKVKGIDPVINQIIDKLKHVVQLLQGRSPKPDKWELLQLGSGGGMVEQVSGDCDDEDGCGGSGSGEVKRTLKITDWMPDDMNFSDVKQIHQTDTGSTLDTTGAGCAVATESMTFTLISVVMLLPGIW</sequence>
<name>GPC5_HUMAN</name>
<evidence type="ECO:0000250" key="1"/>
<evidence type="ECO:0000255" key="2"/>
<evidence type="ECO:0000256" key="3">
    <source>
        <dbReference type="SAM" id="MobiDB-lite"/>
    </source>
</evidence>
<evidence type="ECO:0000269" key="4">
    <source>
    </source>
</evidence>
<evidence type="ECO:0000269" key="5">
    <source>
    </source>
</evidence>
<evidence type="ECO:0000305" key="6"/>
<feature type="signal peptide" evidence="2">
    <location>
        <begin position="1"/>
        <end position="24"/>
    </location>
</feature>
<feature type="chain" id="PRO_0000012319" description="Glypican-5">
    <location>
        <begin position="25"/>
        <end status="unknown"/>
    </location>
</feature>
<feature type="chain" id="PRO_0000333849" description="Secreted glypican-5">
    <location>
        <begin position="25"/>
        <end status="unknown"/>
    </location>
</feature>
<feature type="propeptide" id="PRO_0000012320" description="Removed in mature form" evidence="2">
    <location>
        <begin status="unknown"/>
        <end position="572"/>
    </location>
</feature>
<feature type="region of interest" description="Disordered" evidence="3">
    <location>
        <begin position="355"/>
        <end position="375"/>
    </location>
</feature>
<feature type="glycosylation site" description="N-linked (GlcNAc...) asparagine" evidence="2">
    <location>
        <position position="120"/>
    </location>
</feature>
<feature type="glycosylation site" description="N-linked (GlcNAc...) asparagine" evidence="2">
    <location>
        <position position="237"/>
    </location>
</feature>
<feature type="glycosylation site" description="O-linked (Xyl...) (glycosaminoglycan) serine" evidence="2">
    <location>
        <position position="441"/>
    </location>
</feature>
<feature type="glycosylation site" description="O-linked (Xyl...) (glycosaminoglycan) serine" evidence="2">
    <location>
        <position position="486"/>
    </location>
</feature>
<feature type="glycosylation site" description="O-linked (Xyl...) (glycosaminoglycan) serine" evidence="2">
    <location>
        <position position="495"/>
    </location>
</feature>
<feature type="glycosylation site" description="O-linked (Xyl...) (glycosaminoglycan) serine" evidence="2">
    <location>
        <position position="507"/>
    </location>
</feature>
<feature type="glycosylation site" description="O-linked (Xyl...) (glycosaminoglycan) serine" evidence="2">
    <location>
        <position position="509"/>
    </location>
</feature>
<feature type="glycosylation site" description="N-linked (GlcNAc...) asparagine" evidence="2">
    <location>
        <position position="527"/>
    </location>
</feature>
<feature type="sequence variant" id="VAR_024228" description="In dbSNP:rs553717.">
    <original>A</original>
    <variation>V</variation>
    <location>
        <position position="155"/>
    </location>
</feature>
<feature type="sequence conflict" description="In Ref. 2; AAC12261." evidence="6" ref="2">
    <original>G</original>
    <variation>C</variation>
    <location>
        <position position="205"/>
    </location>
</feature>
<feature type="sequence conflict" description="In Ref. 2; AAC12261." evidence="6" ref="2">
    <original>S</original>
    <variation>F</variation>
    <location>
        <position position="245"/>
    </location>
</feature>
<proteinExistence type="evidence at protein level"/>
<dbReference type="EMBL" id="U66033">
    <property type="protein sequence ID" value="AAC51118.1"/>
    <property type="molecule type" value="mRNA"/>
</dbReference>
<dbReference type="EMBL" id="AF001462">
    <property type="protein sequence ID" value="AAC12261.1"/>
    <property type="molecule type" value="mRNA"/>
</dbReference>
<dbReference type="EMBL" id="AK312815">
    <property type="protein sequence ID" value="BAG35673.1"/>
    <property type="molecule type" value="mRNA"/>
</dbReference>
<dbReference type="EMBL" id="AL157363">
    <property type="status" value="NOT_ANNOTATED_CDS"/>
    <property type="molecule type" value="Genomic_DNA"/>
</dbReference>
<dbReference type="EMBL" id="AL138714">
    <property type="status" value="NOT_ANNOTATED_CDS"/>
    <property type="molecule type" value="Genomic_DNA"/>
</dbReference>
<dbReference type="EMBL" id="AL157821">
    <property type="status" value="NOT_ANNOTATED_CDS"/>
    <property type="molecule type" value="Genomic_DNA"/>
</dbReference>
<dbReference type="EMBL" id="AL163537">
    <property type="status" value="NOT_ANNOTATED_CDS"/>
    <property type="molecule type" value="Genomic_DNA"/>
</dbReference>
<dbReference type="EMBL" id="AL162456">
    <property type="status" value="NOT_ANNOTATED_CDS"/>
    <property type="molecule type" value="Genomic_DNA"/>
</dbReference>
<dbReference type="EMBL" id="BC039730">
    <property type="protein sequence ID" value="AAH39730.1"/>
    <property type="molecule type" value="mRNA"/>
</dbReference>
<dbReference type="CCDS" id="CCDS9468.1"/>
<dbReference type="RefSeq" id="NP_004457.1">
    <property type="nucleotide sequence ID" value="NM_004466.6"/>
</dbReference>
<dbReference type="SMR" id="P78333"/>
<dbReference type="BioGRID" id="108553">
    <property type="interactions" value="12"/>
</dbReference>
<dbReference type="FunCoup" id="P78333">
    <property type="interactions" value="567"/>
</dbReference>
<dbReference type="IntAct" id="P78333">
    <property type="interactions" value="15"/>
</dbReference>
<dbReference type="STRING" id="9606.ENSP00000366267"/>
<dbReference type="GlyCosmos" id="P78333">
    <property type="glycosylation" value="8 sites, No reported glycans"/>
</dbReference>
<dbReference type="GlyGen" id="P78333">
    <property type="glycosylation" value="9 sites, 1 O-linked glycan (1 site)"/>
</dbReference>
<dbReference type="iPTMnet" id="P78333"/>
<dbReference type="PhosphoSitePlus" id="P78333"/>
<dbReference type="BioMuta" id="GPC5"/>
<dbReference type="DMDM" id="2829667"/>
<dbReference type="MassIVE" id="P78333"/>
<dbReference type="PaxDb" id="9606-ENSP00000366267"/>
<dbReference type="PeptideAtlas" id="P78333"/>
<dbReference type="ProteomicsDB" id="57571"/>
<dbReference type="Pumba" id="P78333"/>
<dbReference type="Antibodypedia" id="24761">
    <property type="antibodies" value="267 antibodies from 33 providers"/>
</dbReference>
<dbReference type="DNASU" id="2262"/>
<dbReference type="Ensembl" id="ENST00000377067.9">
    <property type="protein sequence ID" value="ENSP00000366267.3"/>
    <property type="gene ID" value="ENSG00000179399.16"/>
</dbReference>
<dbReference type="GeneID" id="2262"/>
<dbReference type="KEGG" id="hsa:2262"/>
<dbReference type="MANE-Select" id="ENST00000377067.9">
    <property type="protein sequence ID" value="ENSP00000366267.3"/>
    <property type="RefSeq nucleotide sequence ID" value="NM_004466.6"/>
    <property type="RefSeq protein sequence ID" value="NP_004457.1"/>
</dbReference>
<dbReference type="UCSC" id="uc010tif.3">
    <property type="organism name" value="human"/>
</dbReference>
<dbReference type="AGR" id="HGNC:4453"/>
<dbReference type="CTD" id="2262"/>
<dbReference type="DisGeNET" id="2262"/>
<dbReference type="GeneCards" id="GPC5"/>
<dbReference type="HGNC" id="HGNC:4453">
    <property type="gene designation" value="GPC5"/>
</dbReference>
<dbReference type="HPA" id="ENSG00000179399">
    <property type="expression patterns" value="Tissue enhanced (brain, kidney, testis)"/>
</dbReference>
<dbReference type="MalaCards" id="GPC5"/>
<dbReference type="MIM" id="602446">
    <property type="type" value="gene"/>
</dbReference>
<dbReference type="neXtProt" id="NX_P78333"/>
<dbReference type="OpenTargets" id="ENSG00000179399"/>
<dbReference type="PharmGKB" id="PA28834"/>
<dbReference type="VEuPathDB" id="HostDB:ENSG00000179399"/>
<dbReference type="eggNOG" id="KOG3821">
    <property type="taxonomic scope" value="Eukaryota"/>
</dbReference>
<dbReference type="GeneTree" id="ENSGT01050000244955"/>
<dbReference type="InParanoid" id="P78333"/>
<dbReference type="OMA" id="RGCSAQY"/>
<dbReference type="OrthoDB" id="6380619at2759"/>
<dbReference type="PAN-GO" id="P78333">
    <property type="GO annotations" value="4 GO annotations based on evolutionary models"/>
</dbReference>
<dbReference type="PhylomeDB" id="P78333"/>
<dbReference type="TreeFam" id="TF105317"/>
<dbReference type="PathwayCommons" id="P78333"/>
<dbReference type="Reactome" id="R-HSA-1971475">
    <property type="pathway name" value="A tetrasaccharide linker sequence is required for GAG synthesis"/>
</dbReference>
<dbReference type="Reactome" id="R-HSA-2022928">
    <property type="pathway name" value="HS-GAG biosynthesis"/>
</dbReference>
<dbReference type="Reactome" id="R-HSA-2024096">
    <property type="pathway name" value="HS-GAG degradation"/>
</dbReference>
<dbReference type="Reactome" id="R-HSA-3560783">
    <property type="pathway name" value="Defective B4GALT7 causes EDS, progeroid type"/>
</dbReference>
<dbReference type="Reactome" id="R-HSA-3560801">
    <property type="pathway name" value="Defective B3GAT3 causes JDSSDHD"/>
</dbReference>
<dbReference type="Reactome" id="R-HSA-3656237">
    <property type="pathway name" value="Defective EXT2 causes exostoses 2"/>
</dbReference>
<dbReference type="Reactome" id="R-HSA-3656253">
    <property type="pathway name" value="Defective EXT1 causes exostoses 1, TRPS2 and CHDS"/>
</dbReference>
<dbReference type="Reactome" id="R-HSA-4420332">
    <property type="pathway name" value="Defective B3GALT6 causes EDSP2 and SEMDJL1"/>
</dbReference>
<dbReference type="Reactome" id="R-HSA-5362798">
    <property type="pathway name" value="Release of Hh-Np from the secreting cell"/>
</dbReference>
<dbReference type="Reactome" id="R-HSA-9694614">
    <property type="pathway name" value="Attachment and Entry"/>
</dbReference>
<dbReference type="Reactome" id="R-HSA-975634">
    <property type="pathway name" value="Retinoid metabolism and transport"/>
</dbReference>
<dbReference type="Reactome" id="R-HSA-9820960">
    <property type="pathway name" value="Respiratory syncytial virus (RSV) attachment and entry"/>
</dbReference>
<dbReference type="Reactome" id="R-HSA-9833110">
    <property type="pathway name" value="RSV-host interactions"/>
</dbReference>
<dbReference type="SignaLink" id="P78333"/>
<dbReference type="BioGRID-ORCS" id="2262">
    <property type="hits" value="18 hits in 1143 CRISPR screens"/>
</dbReference>
<dbReference type="ChiTaRS" id="GPC5">
    <property type="organism name" value="human"/>
</dbReference>
<dbReference type="GeneWiki" id="Glypican_5"/>
<dbReference type="GenomeRNAi" id="2262"/>
<dbReference type="Pharos" id="P78333">
    <property type="development level" value="Tbio"/>
</dbReference>
<dbReference type="PRO" id="PR:P78333"/>
<dbReference type="Proteomes" id="UP000005640">
    <property type="component" value="Chromosome 13"/>
</dbReference>
<dbReference type="RNAct" id="P78333">
    <property type="molecule type" value="protein"/>
</dbReference>
<dbReference type="Bgee" id="ENSG00000179399">
    <property type="expression patterns" value="Expressed in male germ line stem cell (sensu Vertebrata) in testis and 124 other cell types or tissues"/>
</dbReference>
<dbReference type="ExpressionAtlas" id="P78333">
    <property type="expression patterns" value="baseline and differential"/>
</dbReference>
<dbReference type="GO" id="GO:0009986">
    <property type="term" value="C:cell surface"/>
    <property type="evidence" value="ECO:0000318"/>
    <property type="project" value="GO_Central"/>
</dbReference>
<dbReference type="GO" id="GO:0005576">
    <property type="term" value="C:extracellular region"/>
    <property type="evidence" value="ECO:0000304"/>
    <property type="project" value="Reactome"/>
</dbReference>
<dbReference type="GO" id="GO:0005796">
    <property type="term" value="C:Golgi lumen"/>
    <property type="evidence" value="ECO:0000304"/>
    <property type="project" value="Reactome"/>
</dbReference>
<dbReference type="GO" id="GO:0043202">
    <property type="term" value="C:lysosomal lumen"/>
    <property type="evidence" value="ECO:0000304"/>
    <property type="project" value="Reactome"/>
</dbReference>
<dbReference type="GO" id="GO:0016020">
    <property type="term" value="C:membrane"/>
    <property type="evidence" value="ECO:0000304"/>
    <property type="project" value="UniProtKB"/>
</dbReference>
<dbReference type="GO" id="GO:0005886">
    <property type="term" value="C:plasma membrane"/>
    <property type="evidence" value="ECO:0000304"/>
    <property type="project" value="Reactome"/>
</dbReference>
<dbReference type="GO" id="GO:0098552">
    <property type="term" value="C:side of membrane"/>
    <property type="evidence" value="ECO:0007669"/>
    <property type="project" value="UniProtKB-KW"/>
</dbReference>
<dbReference type="GO" id="GO:0016477">
    <property type="term" value="P:cell migration"/>
    <property type="evidence" value="ECO:0000318"/>
    <property type="project" value="GO_Central"/>
</dbReference>
<dbReference type="GO" id="GO:0090263">
    <property type="term" value="P:positive regulation of canonical Wnt signaling pathway"/>
    <property type="evidence" value="ECO:0000318"/>
    <property type="project" value="GO_Central"/>
</dbReference>
<dbReference type="GO" id="GO:1905475">
    <property type="term" value="P:regulation of protein localization to membrane"/>
    <property type="evidence" value="ECO:0000318"/>
    <property type="project" value="GO_Central"/>
</dbReference>
<dbReference type="InterPro" id="IPR001863">
    <property type="entry name" value="Glypican"/>
</dbReference>
<dbReference type="InterPro" id="IPR019803">
    <property type="entry name" value="Glypican_CS"/>
</dbReference>
<dbReference type="PANTHER" id="PTHR10822">
    <property type="entry name" value="GLYPICAN"/>
    <property type="match status" value="1"/>
</dbReference>
<dbReference type="PANTHER" id="PTHR10822:SF12">
    <property type="entry name" value="GLYPICAN-5"/>
    <property type="match status" value="1"/>
</dbReference>
<dbReference type="Pfam" id="PF01153">
    <property type="entry name" value="Glypican"/>
    <property type="match status" value="1"/>
</dbReference>
<dbReference type="PROSITE" id="PS01207">
    <property type="entry name" value="GLYPICAN"/>
    <property type="match status" value="1"/>
</dbReference>
<gene>
    <name type="primary">GPC5</name>
</gene>
<accession>P78333</accession>
<accession>B2R726</accession>
<accession>O60436</accession>
<accession>Q9BX27</accession>